<keyword id="KW-0687">Ribonucleoprotein</keyword>
<keyword id="KW-0689">Ribosomal protein</keyword>
<keyword id="KW-0694">RNA-binding</keyword>
<keyword id="KW-0699">rRNA-binding</keyword>
<keyword id="KW-0820">tRNA-binding</keyword>
<organism>
    <name type="scientific">Mycobacterium leprae (strain Br4923)</name>
    <dbReference type="NCBI Taxonomy" id="561304"/>
    <lineage>
        <taxon>Bacteria</taxon>
        <taxon>Bacillati</taxon>
        <taxon>Actinomycetota</taxon>
        <taxon>Actinomycetes</taxon>
        <taxon>Mycobacteriales</taxon>
        <taxon>Mycobacteriaceae</taxon>
        <taxon>Mycobacterium</taxon>
    </lineage>
</organism>
<gene>
    <name evidence="1" type="primary">rpsM</name>
    <name type="ordered locus">MLBr01960</name>
</gene>
<comment type="function">
    <text evidence="1">Located at the top of the head of the 30S subunit, it contacts several helices of the 16S rRNA. In the 70S ribosome it contacts the 23S rRNA (bridge B1a) and protein L5 of the 50S subunit (bridge B1b), connecting the 2 subunits; these bridges are implicated in subunit movement. Contacts the tRNAs in the A and P-sites.</text>
</comment>
<comment type="subunit">
    <text evidence="1">Part of the 30S ribosomal subunit. Forms a loose heterodimer with protein S19. Forms two bridges to the 50S subunit in the 70S ribosome.</text>
</comment>
<comment type="similarity">
    <text evidence="1">Belongs to the universal ribosomal protein uS13 family.</text>
</comment>
<dbReference type="EMBL" id="FM211192">
    <property type="protein sequence ID" value="CAR72057.1"/>
    <property type="molecule type" value="Genomic_DNA"/>
</dbReference>
<dbReference type="SMR" id="B8ZSH9"/>
<dbReference type="KEGG" id="mlb:MLBr01960"/>
<dbReference type="HOGENOM" id="CLU_103849_1_2_11"/>
<dbReference type="Proteomes" id="UP000006900">
    <property type="component" value="Chromosome"/>
</dbReference>
<dbReference type="GO" id="GO:0005829">
    <property type="term" value="C:cytosol"/>
    <property type="evidence" value="ECO:0007669"/>
    <property type="project" value="TreeGrafter"/>
</dbReference>
<dbReference type="GO" id="GO:0015935">
    <property type="term" value="C:small ribosomal subunit"/>
    <property type="evidence" value="ECO:0007669"/>
    <property type="project" value="TreeGrafter"/>
</dbReference>
<dbReference type="GO" id="GO:0019843">
    <property type="term" value="F:rRNA binding"/>
    <property type="evidence" value="ECO:0007669"/>
    <property type="project" value="UniProtKB-UniRule"/>
</dbReference>
<dbReference type="GO" id="GO:0003735">
    <property type="term" value="F:structural constituent of ribosome"/>
    <property type="evidence" value="ECO:0007669"/>
    <property type="project" value="InterPro"/>
</dbReference>
<dbReference type="GO" id="GO:0000049">
    <property type="term" value="F:tRNA binding"/>
    <property type="evidence" value="ECO:0007669"/>
    <property type="project" value="UniProtKB-UniRule"/>
</dbReference>
<dbReference type="GO" id="GO:0006412">
    <property type="term" value="P:translation"/>
    <property type="evidence" value="ECO:0007669"/>
    <property type="project" value="UniProtKB-UniRule"/>
</dbReference>
<dbReference type="FunFam" id="1.10.8.50:FF:000001">
    <property type="entry name" value="30S ribosomal protein S13"/>
    <property type="match status" value="1"/>
</dbReference>
<dbReference type="FunFam" id="4.10.910.10:FF:000001">
    <property type="entry name" value="30S ribosomal protein S13"/>
    <property type="match status" value="1"/>
</dbReference>
<dbReference type="Gene3D" id="1.10.8.50">
    <property type="match status" value="1"/>
</dbReference>
<dbReference type="Gene3D" id="4.10.910.10">
    <property type="entry name" value="30s ribosomal protein s13, domain 2"/>
    <property type="match status" value="1"/>
</dbReference>
<dbReference type="HAMAP" id="MF_01315">
    <property type="entry name" value="Ribosomal_uS13"/>
    <property type="match status" value="1"/>
</dbReference>
<dbReference type="InterPro" id="IPR027437">
    <property type="entry name" value="Rbsml_uS13_C"/>
</dbReference>
<dbReference type="InterPro" id="IPR001892">
    <property type="entry name" value="Ribosomal_uS13"/>
</dbReference>
<dbReference type="InterPro" id="IPR010979">
    <property type="entry name" value="Ribosomal_uS13-like_H2TH"/>
</dbReference>
<dbReference type="InterPro" id="IPR019980">
    <property type="entry name" value="Ribosomal_uS13_bac-type"/>
</dbReference>
<dbReference type="InterPro" id="IPR018269">
    <property type="entry name" value="Ribosomal_uS13_CS"/>
</dbReference>
<dbReference type="NCBIfam" id="TIGR03631">
    <property type="entry name" value="uS13_bact"/>
    <property type="match status" value="1"/>
</dbReference>
<dbReference type="PANTHER" id="PTHR10871">
    <property type="entry name" value="30S RIBOSOMAL PROTEIN S13/40S RIBOSOMAL PROTEIN S18"/>
    <property type="match status" value="1"/>
</dbReference>
<dbReference type="PANTHER" id="PTHR10871:SF1">
    <property type="entry name" value="SMALL RIBOSOMAL SUBUNIT PROTEIN US13M"/>
    <property type="match status" value="1"/>
</dbReference>
<dbReference type="Pfam" id="PF00416">
    <property type="entry name" value="Ribosomal_S13"/>
    <property type="match status" value="1"/>
</dbReference>
<dbReference type="PIRSF" id="PIRSF002134">
    <property type="entry name" value="Ribosomal_S13"/>
    <property type="match status" value="1"/>
</dbReference>
<dbReference type="SUPFAM" id="SSF46946">
    <property type="entry name" value="S13-like H2TH domain"/>
    <property type="match status" value="1"/>
</dbReference>
<dbReference type="PROSITE" id="PS00646">
    <property type="entry name" value="RIBOSOMAL_S13_1"/>
    <property type="match status" value="1"/>
</dbReference>
<dbReference type="PROSITE" id="PS50159">
    <property type="entry name" value="RIBOSOMAL_S13_2"/>
    <property type="match status" value="1"/>
</dbReference>
<evidence type="ECO:0000255" key="1">
    <source>
        <dbReference type="HAMAP-Rule" id="MF_01315"/>
    </source>
</evidence>
<evidence type="ECO:0000256" key="2">
    <source>
        <dbReference type="SAM" id="MobiDB-lite"/>
    </source>
</evidence>
<evidence type="ECO:0000305" key="3"/>
<name>RS13_MYCLB</name>
<sequence length="124" mass="14383">MARLVGVDLPRDKRMEVALTYIYGIGRTRANEILEATGIERDLRTRDLTDDQLTHLRDYIEANLKVEGDLRREVQADIRRKMEIGCYQGLRHRRGLPVRGQRTKTNARTRKGPKRTIAGKKKAR</sequence>
<feature type="chain" id="PRO_1000165630" description="Small ribosomal subunit protein uS13">
    <location>
        <begin position="1"/>
        <end position="124"/>
    </location>
</feature>
<feature type="region of interest" description="Disordered" evidence="2">
    <location>
        <begin position="98"/>
        <end position="124"/>
    </location>
</feature>
<protein>
    <recommendedName>
        <fullName evidence="1">Small ribosomal subunit protein uS13</fullName>
    </recommendedName>
    <alternativeName>
        <fullName evidence="3">30S ribosomal protein S13</fullName>
    </alternativeName>
</protein>
<accession>B8ZSH9</accession>
<reference key="1">
    <citation type="journal article" date="2009" name="Nat. Genet.">
        <title>Comparative genomic and phylogeographic analysis of Mycobacterium leprae.</title>
        <authorList>
            <person name="Monot M."/>
            <person name="Honore N."/>
            <person name="Garnier T."/>
            <person name="Zidane N."/>
            <person name="Sherafi D."/>
            <person name="Paniz-Mondolfi A."/>
            <person name="Matsuoka M."/>
            <person name="Taylor G.M."/>
            <person name="Donoghue H.D."/>
            <person name="Bouwman A."/>
            <person name="Mays S."/>
            <person name="Watson C."/>
            <person name="Lockwood D."/>
            <person name="Khamispour A."/>
            <person name="Dowlati Y."/>
            <person name="Jianping S."/>
            <person name="Rea T.H."/>
            <person name="Vera-Cabrera L."/>
            <person name="Stefani M.M."/>
            <person name="Banu S."/>
            <person name="Macdonald M."/>
            <person name="Sapkota B.R."/>
            <person name="Spencer J.S."/>
            <person name="Thomas J."/>
            <person name="Harshman K."/>
            <person name="Singh P."/>
            <person name="Busso P."/>
            <person name="Gattiker A."/>
            <person name="Rougemont J."/>
            <person name="Brennan P.J."/>
            <person name="Cole S.T."/>
        </authorList>
    </citation>
    <scope>NUCLEOTIDE SEQUENCE [LARGE SCALE GENOMIC DNA]</scope>
    <source>
        <strain>Br4923</strain>
    </source>
</reference>
<proteinExistence type="inferred from homology"/>